<organism>
    <name type="scientific">Saccharolobus solfataricus (strain ATCC 35092 / DSM 1617 / JCM 11322 / P2)</name>
    <name type="common">Sulfolobus solfataricus</name>
    <dbReference type="NCBI Taxonomy" id="273057"/>
    <lineage>
        <taxon>Archaea</taxon>
        <taxon>Thermoproteota</taxon>
        <taxon>Thermoprotei</taxon>
        <taxon>Sulfolobales</taxon>
        <taxon>Sulfolobaceae</taxon>
        <taxon>Saccharolobus</taxon>
    </lineage>
</organism>
<feature type="chain" id="PRO_0000206882" description="Uncharacterized protein SSO3021">
    <location>
        <begin position="1"/>
        <end position="592"/>
    </location>
</feature>
<keyword id="KW-1185">Reference proteome</keyword>
<proteinExistence type="predicted"/>
<evidence type="ECO:0000305" key="1"/>
<gene>
    <name type="ordered locus">SSO3021</name>
</gene>
<reference key="1">
    <citation type="journal article" date="2000" name="J. Biol. Chem.">
        <title>Identification and molecular characterization of the first alpha-xylosidase from an Archaeon.</title>
        <authorList>
            <person name="Moracci M."/>
            <person name="Ponzano B.C."/>
            <person name="Trincone A."/>
            <person name="Fusco S."/>
            <person name="De Rosa M."/>
            <person name="van der Oost J."/>
            <person name="Sensen C.W."/>
            <person name="Charlebois R.L."/>
            <person name="Rossi M."/>
        </authorList>
    </citation>
    <scope>NUCLEOTIDE SEQUENCE [GENOMIC DNA]</scope>
    <source>
        <strain>ATCC 35092 / DSM 1617 / JCM 11322 / P2</strain>
    </source>
</reference>
<reference key="2">
    <citation type="journal article" date="2001" name="Proc. Natl. Acad. Sci. U.S.A.">
        <title>The complete genome of the crenarchaeon Sulfolobus solfataricus P2.</title>
        <authorList>
            <person name="She Q."/>
            <person name="Singh R.K."/>
            <person name="Confalonieri F."/>
            <person name="Zivanovic Y."/>
            <person name="Allard G."/>
            <person name="Awayez M.J."/>
            <person name="Chan-Weiher C.C.-Y."/>
            <person name="Clausen I.G."/>
            <person name="Curtis B.A."/>
            <person name="De Moors A."/>
            <person name="Erauso G."/>
            <person name="Fletcher C."/>
            <person name="Gordon P.M.K."/>
            <person name="Heikamp-de Jong I."/>
            <person name="Jeffries A.C."/>
            <person name="Kozera C.J."/>
            <person name="Medina N."/>
            <person name="Peng X."/>
            <person name="Thi-Ngoc H.P."/>
            <person name="Redder P."/>
            <person name="Schenk M.E."/>
            <person name="Theriault C."/>
            <person name="Tolstrup N."/>
            <person name="Charlebois R.L."/>
            <person name="Doolittle W.F."/>
            <person name="Duguet M."/>
            <person name="Gaasterland T."/>
            <person name="Garrett R.A."/>
            <person name="Ragan M.A."/>
            <person name="Sensen C.W."/>
            <person name="Van der Oost J."/>
        </authorList>
    </citation>
    <scope>NUCLEOTIDE SEQUENCE [LARGE SCALE GENOMIC DNA]</scope>
    <source>
        <strain>ATCC 35092 / DSM 1617 / JCM 11322 / P2</strain>
    </source>
</reference>
<reference key="3">
    <citation type="journal article" date="1990" name="Gene">
        <title>Isolation and sequencing of a new beta-galactosidase-encoding archaebacterial gene.</title>
        <authorList>
            <person name="Cubellis M.V."/>
            <person name="Rozzo C."/>
            <person name="Montecucchi P."/>
            <person name="Rossi M."/>
        </authorList>
    </citation>
    <scope>NUCLEOTIDE SEQUENCE [GENOMIC DNA] OF 377-592</scope>
    <source>
        <strain>DSM 5833 / MT-4</strain>
    </source>
</reference>
<name>Y3021_SACS2</name>
<accession>P22795</accession>
<accession>Q9P998</accession>
<comment type="sequence caution" evidence="1">
    <conflict type="erroneous initiation">
        <sequence resource="EMBL-CDS" id="AAK43122"/>
    </conflict>
</comment>
<dbReference type="EMBL" id="AJ251975">
    <property type="protein sequence ID" value="CAB99207.1"/>
    <property type="molecule type" value="Genomic_DNA"/>
</dbReference>
<dbReference type="EMBL" id="AE006641">
    <property type="protein sequence ID" value="AAK43122.1"/>
    <property type="status" value="ALT_INIT"/>
    <property type="molecule type" value="Genomic_DNA"/>
</dbReference>
<dbReference type="EMBL" id="M34696">
    <property type="status" value="NOT_ANNOTATED_CDS"/>
    <property type="molecule type" value="Genomic_DNA"/>
</dbReference>
<dbReference type="PIR" id="C90483">
    <property type="entry name" value="C90483"/>
</dbReference>
<dbReference type="PIR" id="JQ0768">
    <property type="entry name" value="JQ0768"/>
</dbReference>
<dbReference type="RefSeq" id="WP_009992678.1">
    <property type="nucleotide sequence ID" value="NC_002754.1"/>
</dbReference>
<dbReference type="SMR" id="P22795"/>
<dbReference type="STRING" id="273057.SSO3021"/>
<dbReference type="PaxDb" id="273057-SSO3021"/>
<dbReference type="EnsemblBacteria" id="AAK43122">
    <property type="protein sequence ID" value="AAK43122"/>
    <property type="gene ID" value="SSO3021"/>
</dbReference>
<dbReference type="KEGG" id="sso:SSO3021"/>
<dbReference type="PATRIC" id="fig|273057.12.peg.3114"/>
<dbReference type="eggNOG" id="arCOG07336">
    <property type="taxonomic scope" value="Archaea"/>
</dbReference>
<dbReference type="HOGENOM" id="CLU_499426_0_0_2"/>
<dbReference type="InParanoid" id="P22795"/>
<dbReference type="Proteomes" id="UP000001974">
    <property type="component" value="Chromosome"/>
</dbReference>
<sequence length="592" mass="68145">MKEFKLAVYVTAPTLRGLNEERIKKLIEKFKELGVVKIYLENYRDGIMLDVNTMIKFKEVFEREFEVAGGMAIGTWGEGWGEMENYGFKVACIADERNREMVKNVVEEQAKVFDEIIIDDFWANWCHSEKDVKLFNSMYGVNFTKGTLLKMLRDPVISRLWCEYSSSLVYNASRDYVVKPAKNVNEKVKITLKVAEWREDFYHRGLKLDKLAEIFDNIYVGTEAREYTARYGSLYIVDYVKGLVGDKLKGVWFDTFIGGEGGDYGSFKTYLQQFILSAFGLTEEITLFEAGDILDPERRSLFESIMENKEKVQRWREDIREYASIGLKRIPLQHFMTQRFDKYVEDHLGIIGIPLEVSNVVNPSDILLITESDIYHLDIVDLLNRGVNLMFTASAAKKLIEVLGDTALKILGVGNLIYDSVSVNALTRDGKTFYWSYYKRQANFPVGPIFSLNGATPILYAYNGVELHPVVFQNTYSNSKVYVLSLTTYLPYLISEFYPSVARQIIRDIVGDHIGIRAIATYPFLFSLIIKRDGLVTVLNLNDFPIRLTLSVDPKRYKINNIEGMKVLQSNENEIRIRLKENSFGIVRLEKV</sequence>
<protein>
    <recommendedName>
        <fullName>Uncharacterized protein SSO3021</fullName>
    </recommendedName>
</protein>